<comment type="subcellular location">
    <subcellularLocation>
        <location>Nucleus</location>
    </subcellularLocation>
</comment>
<comment type="similarity">
    <text evidence="3">Belongs to the even-skipped homeobox family.</text>
</comment>
<gene>
    <name type="primary">Evx2</name>
    <name type="synonym">Evx-2</name>
</gene>
<proteinExistence type="evidence at transcript level"/>
<keyword id="KW-0217">Developmental protein</keyword>
<keyword id="KW-0238">DNA-binding</keyword>
<keyword id="KW-0371">Homeobox</keyword>
<keyword id="KW-0539">Nucleus</keyword>
<keyword id="KW-1185">Reference proteome</keyword>
<sequence length="475" mass="47902">MMERIRKEMILMERGLHSPTAGKRFSSLSDSAGGAVLEALENSQHPARLSPRLPSAPLHGALGDLPAKGKFEIDTLFNLQHPSSESTVSSEIASATESRKKPSHYSEAAAEADMSSDVEVGCSALRSPSGLGAAPLKENNAKGYTESGSVAGTTTSASGSGLGSLHGGGGGGNSGAAALGGSGSGSGADQVRRYRTAFTREQIARLEKEFYRENYVSRPRRCELAAALNLPETTIKVWFQNRRMKDKRQRLAMSWPHPADPSFYTYMMTHAAATGSLPYPFHSHVPLHYYPHVGVTAAAAAAAASGAAAAASSPFATSIRPLDTFRALSHPYSRPELLCSFRHPGLYQAPAAAAGLNSAASAAAAAAAAAAAASSAAAAGAPPSGSSAPCSCLSCHSSQSAAAAAAAAAAALGSRGGGGSGGGGGGGAGTAGGSDFGCSAAAPRSESGFLPYSAAVLSKTAVSPPDQRDEAPLTR</sequence>
<dbReference type="EMBL" id="S34322">
    <property type="protein sequence ID" value="AAB22138.1"/>
    <property type="molecule type" value="Genomic_DNA"/>
</dbReference>
<dbReference type="EMBL" id="S34320">
    <property type="protein sequence ID" value="AAB22138.1"/>
    <property type="status" value="JOINED"/>
    <property type="molecule type" value="Genomic_DNA"/>
</dbReference>
<dbReference type="EMBL" id="S34321">
    <property type="protein sequence ID" value="AAB22138.1"/>
    <property type="status" value="JOINED"/>
    <property type="molecule type" value="Genomic_DNA"/>
</dbReference>
<dbReference type="EMBL" id="M93128">
    <property type="protein sequence ID" value="AAA37585.1"/>
    <property type="molecule type" value="mRNA"/>
</dbReference>
<dbReference type="CCDS" id="CCDS16138.1"/>
<dbReference type="PIR" id="A43915">
    <property type="entry name" value="A43915"/>
</dbReference>
<dbReference type="RefSeq" id="NP_031993.1">
    <property type="nucleotide sequence ID" value="NM_007967.3"/>
</dbReference>
<dbReference type="RefSeq" id="XP_006498791.1">
    <property type="nucleotide sequence ID" value="XM_006498728.4"/>
</dbReference>
<dbReference type="RefSeq" id="XP_006498792.1">
    <property type="nucleotide sequence ID" value="XM_006498729.4"/>
</dbReference>
<dbReference type="FunCoup" id="P49749">
    <property type="interactions" value="1244"/>
</dbReference>
<dbReference type="STRING" id="10090.ENSMUSP00000134131"/>
<dbReference type="PaxDb" id="10090-ENSMUSP00000134131"/>
<dbReference type="ProteomicsDB" id="271508"/>
<dbReference type="Antibodypedia" id="19511">
    <property type="antibodies" value="142 antibodies from 23 providers"/>
</dbReference>
<dbReference type="DNASU" id="14029"/>
<dbReference type="Ensembl" id="ENSMUST00000173623.2">
    <property type="protein sequence ID" value="ENSMUSP00000134131.2"/>
    <property type="gene ID" value="ENSMUSG00000001815.16"/>
</dbReference>
<dbReference type="GeneID" id="14029"/>
<dbReference type="KEGG" id="mmu:14029"/>
<dbReference type="UCSC" id="uc008kdt.1">
    <property type="organism name" value="mouse"/>
</dbReference>
<dbReference type="AGR" id="MGI:95462"/>
<dbReference type="CTD" id="344191"/>
<dbReference type="MGI" id="MGI:95462">
    <property type="gene designation" value="Evx2"/>
</dbReference>
<dbReference type="VEuPathDB" id="HostDB:ENSMUSG00000001815"/>
<dbReference type="eggNOG" id="KOG0844">
    <property type="taxonomic scope" value="Eukaryota"/>
</dbReference>
<dbReference type="GeneTree" id="ENSGT00940000161025"/>
<dbReference type="HOGENOM" id="CLU_045075_0_0_1"/>
<dbReference type="InParanoid" id="P49749"/>
<dbReference type="OMA" id="NKGYAES"/>
<dbReference type="OrthoDB" id="76871at9989"/>
<dbReference type="PhylomeDB" id="P49749"/>
<dbReference type="TreeFam" id="TF315938"/>
<dbReference type="BioGRID-ORCS" id="14029">
    <property type="hits" value="1 hit in 76 CRISPR screens"/>
</dbReference>
<dbReference type="PRO" id="PR:P49749"/>
<dbReference type="Proteomes" id="UP000000589">
    <property type="component" value="Chromosome 2"/>
</dbReference>
<dbReference type="RNAct" id="P49749">
    <property type="molecule type" value="protein"/>
</dbReference>
<dbReference type="Bgee" id="ENSMUSG00000001815">
    <property type="expression patterns" value="Expressed in neural tube marginal layer and 75 other cell types or tissues"/>
</dbReference>
<dbReference type="ExpressionAtlas" id="P49749">
    <property type="expression patterns" value="baseline and differential"/>
</dbReference>
<dbReference type="GO" id="GO:0005634">
    <property type="term" value="C:nucleus"/>
    <property type="evidence" value="ECO:0007669"/>
    <property type="project" value="UniProtKB-SubCell"/>
</dbReference>
<dbReference type="GO" id="GO:0000981">
    <property type="term" value="F:DNA-binding transcription factor activity, RNA polymerase II-specific"/>
    <property type="evidence" value="ECO:0007669"/>
    <property type="project" value="InterPro"/>
</dbReference>
<dbReference type="GO" id="GO:1990837">
    <property type="term" value="F:sequence-specific double-stranded DNA binding"/>
    <property type="evidence" value="ECO:0007669"/>
    <property type="project" value="Ensembl"/>
</dbReference>
<dbReference type="GO" id="GO:0035108">
    <property type="term" value="P:limb morphogenesis"/>
    <property type="evidence" value="ECO:0000315"/>
    <property type="project" value="MGI"/>
</dbReference>
<dbReference type="CDD" id="cd00086">
    <property type="entry name" value="homeodomain"/>
    <property type="match status" value="1"/>
</dbReference>
<dbReference type="FunFam" id="1.10.10.60:FF:000367">
    <property type="entry name" value="homeobox even-skipped homolog protein 2"/>
    <property type="match status" value="1"/>
</dbReference>
<dbReference type="Gene3D" id="1.10.10.60">
    <property type="entry name" value="Homeodomain-like"/>
    <property type="match status" value="1"/>
</dbReference>
<dbReference type="InterPro" id="IPR052002">
    <property type="entry name" value="Even-skipped_HD"/>
</dbReference>
<dbReference type="InterPro" id="IPR001356">
    <property type="entry name" value="HD"/>
</dbReference>
<dbReference type="InterPro" id="IPR020479">
    <property type="entry name" value="HD_metazoa"/>
</dbReference>
<dbReference type="InterPro" id="IPR017970">
    <property type="entry name" value="Homeobox_CS"/>
</dbReference>
<dbReference type="InterPro" id="IPR009057">
    <property type="entry name" value="Homeodomain-like_sf"/>
</dbReference>
<dbReference type="PANTHER" id="PTHR46294:SF1">
    <property type="entry name" value="HOMEOBOX EVEN-SKIPPED HOMOLOG PROTEIN 2"/>
    <property type="match status" value="1"/>
</dbReference>
<dbReference type="PANTHER" id="PTHR46294">
    <property type="entry name" value="SEGMENTATION PROTEIN EVEN-SKIPPED"/>
    <property type="match status" value="1"/>
</dbReference>
<dbReference type="Pfam" id="PF00046">
    <property type="entry name" value="Homeodomain"/>
    <property type="match status" value="1"/>
</dbReference>
<dbReference type="PRINTS" id="PR00024">
    <property type="entry name" value="HOMEOBOX"/>
</dbReference>
<dbReference type="SMART" id="SM00389">
    <property type="entry name" value="HOX"/>
    <property type="match status" value="1"/>
</dbReference>
<dbReference type="SUPFAM" id="SSF46689">
    <property type="entry name" value="Homeodomain-like"/>
    <property type="match status" value="1"/>
</dbReference>
<dbReference type="PROSITE" id="PS00027">
    <property type="entry name" value="HOMEOBOX_1"/>
    <property type="match status" value="1"/>
</dbReference>
<dbReference type="PROSITE" id="PS50071">
    <property type="entry name" value="HOMEOBOX_2"/>
    <property type="match status" value="1"/>
</dbReference>
<evidence type="ECO:0000255" key="1">
    <source>
        <dbReference type="PROSITE-ProRule" id="PRU00108"/>
    </source>
</evidence>
<evidence type="ECO:0000256" key="2">
    <source>
        <dbReference type="SAM" id="MobiDB-lite"/>
    </source>
</evidence>
<evidence type="ECO:0000305" key="3"/>
<organism>
    <name type="scientific">Mus musculus</name>
    <name type="common">Mouse</name>
    <dbReference type="NCBI Taxonomy" id="10090"/>
    <lineage>
        <taxon>Eukaryota</taxon>
        <taxon>Metazoa</taxon>
        <taxon>Chordata</taxon>
        <taxon>Craniata</taxon>
        <taxon>Vertebrata</taxon>
        <taxon>Euteleostomi</taxon>
        <taxon>Mammalia</taxon>
        <taxon>Eutheria</taxon>
        <taxon>Euarchontoglires</taxon>
        <taxon>Glires</taxon>
        <taxon>Rodentia</taxon>
        <taxon>Myomorpha</taxon>
        <taxon>Muroidea</taxon>
        <taxon>Muridae</taxon>
        <taxon>Murinae</taxon>
        <taxon>Mus</taxon>
        <taxon>Mus</taxon>
    </lineage>
</organism>
<reference key="1">
    <citation type="journal article" date="1992" name="Dev. Biol.">
        <title>Analysis of mouse Evx genes: Evx-1 displays graded expression in the primitive streak.</title>
        <authorList>
            <person name="Dush M.K."/>
            <person name="Martin G.R."/>
        </authorList>
    </citation>
    <scope>NUCLEOTIDE SEQUENCE [GENOMIC DNA]</scope>
</reference>
<protein>
    <recommendedName>
        <fullName>Homeobox even-skipped homolog protein 2</fullName>
    </recommendedName>
    <alternativeName>
        <fullName>EVX-2</fullName>
    </alternativeName>
</protein>
<accession>P49749</accession>
<name>EVX2_MOUSE</name>
<feature type="chain" id="PRO_0000048873" description="Homeobox even-skipped homolog protein 2">
    <location>
        <begin position="1"/>
        <end position="475"/>
    </location>
</feature>
<feature type="DNA-binding region" description="Homeobox" evidence="1">
    <location>
        <begin position="191"/>
        <end position="250"/>
    </location>
</feature>
<feature type="region of interest" description="Disordered" evidence="2">
    <location>
        <begin position="82"/>
        <end position="113"/>
    </location>
</feature>
<feature type="region of interest" description="Disordered" evidence="2">
    <location>
        <begin position="155"/>
        <end position="189"/>
    </location>
</feature>
<feature type="compositionally biased region" description="Low complexity" evidence="2">
    <location>
        <begin position="83"/>
        <end position="96"/>
    </location>
</feature>
<feature type="compositionally biased region" description="Gly residues" evidence="2">
    <location>
        <begin position="160"/>
        <end position="186"/>
    </location>
</feature>